<organism>
    <name type="scientific">Emericella nidulans (strain FGSC A4 / ATCC 38163 / CBS 112.46 / NRRL 194 / M139)</name>
    <name type="common">Aspergillus nidulans</name>
    <dbReference type="NCBI Taxonomy" id="227321"/>
    <lineage>
        <taxon>Eukaryota</taxon>
        <taxon>Fungi</taxon>
        <taxon>Dikarya</taxon>
        <taxon>Ascomycota</taxon>
        <taxon>Pezizomycotina</taxon>
        <taxon>Eurotiomycetes</taxon>
        <taxon>Eurotiomycetidae</taxon>
        <taxon>Eurotiales</taxon>
        <taxon>Aspergillaceae</taxon>
        <taxon>Aspergillus</taxon>
        <taxon>Aspergillus subgen. Nidulantes</taxon>
    </lineage>
</organism>
<proteinExistence type="inferred from homology"/>
<accession>Q5BCH7</accession>
<accession>C8VP55</accession>
<sequence length="233" mass="24576">MANVALIGCTGMVGAHILTSLIANPAVTRIDTISRRTPQAASSAPQAKLTTIVSTDTSKWASELSSLTPIPSIFISALGTTRAAAGSFENQYKLDHDLNLEMAKAARDAGTKVYVLISSSGADVKSNFAYTRMKGEIEEGVKALGFERTVILRPGLIAGQREESRPAEAVARFFAGALGKVHSSLKDGWAQESDVIGKAAVNAGLKALNGEVPAGSEKVWYLYGSDIIQHGKE</sequence>
<keyword id="KW-0472">Membrane</keyword>
<keyword id="KW-0496">Mitochondrion</keyword>
<keyword id="KW-1000">Mitochondrion outer membrane</keyword>
<keyword id="KW-1185">Reference proteome</keyword>
<keyword id="KW-0809">Transit peptide</keyword>
<name>FMP52_EMENI</name>
<feature type="transit peptide" description="Mitochondrion">
    <location>
        <begin position="1"/>
        <end position="36"/>
    </location>
</feature>
<feature type="chain" id="PRO_0000301822" description="Protein fmp52, mitochondrial">
    <location>
        <begin position="37"/>
        <end position="233"/>
    </location>
</feature>
<evidence type="ECO:0000250" key="1"/>
<evidence type="ECO:0000305" key="2"/>
<protein>
    <recommendedName>
        <fullName>Protein fmp52, mitochondrial</fullName>
    </recommendedName>
</protein>
<reference key="1">
    <citation type="journal article" date="2005" name="Nature">
        <title>Sequencing of Aspergillus nidulans and comparative analysis with A. fumigatus and A. oryzae.</title>
        <authorList>
            <person name="Galagan J.E."/>
            <person name="Calvo S.E."/>
            <person name="Cuomo C."/>
            <person name="Ma L.-J."/>
            <person name="Wortman J.R."/>
            <person name="Batzoglou S."/>
            <person name="Lee S.-I."/>
            <person name="Bastuerkmen M."/>
            <person name="Spevak C.C."/>
            <person name="Clutterbuck J."/>
            <person name="Kapitonov V."/>
            <person name="Jurka J."/>
            <person name="Scazzocchio C."/>
            <person name="Farman M.L."/>
            <person name="Butler J."/>
            <person name="Purcell S."/>
            <person name="Harris S."/>
            <person name="Braus G.H."/>
            <person name="Draht O."/>
            <person name="Busch S."/>
            <person name="D'Enfert C."/>
            <person name="Bouchier C."/>
            <person name="Goldman G.H."/>
            <person name="Bell-Pedersen D."/>
            <person name="Griffiths-Jones S."/>
            <person name="Doonan J.H."/>
            <person name="Yu J."/>
            <person name="Vienken K."/>
            <person name="Pain A."/>
            <person name="Freitag M."/>
            <person name="Selker E.U."/>
            <person name="Archer D.B."/>
            <person name="Penalva M.A."/>
            <person name="Oakley B.R."/>
            <person name="Momany M."/>
            <person name="Tanaka T."/>
            <person name="Kumagai T."/>
            <person name="Asai K."/>
            <person name="Machida M."/>
            <person name="Nierman W.C."/>
            <person name="Denning D.W."/>
            <person name="Caddick M.X."/>
            <person name="Hynes M."/>
            <person name="Paoletti M."/>
            <person name="Fischer R."/>
            <person name="Miller B.L."/>
            <person name="Dyer P.S."/>
            <person name="Sachs M.S."/>
            <person name="Osmani S.A."/>
            <person name="Birren B.W."/>
        </authorList>
    </citation>
    <scope>NUCLEOTIDE SEQUENCE [LARGE SCALE GENOMIC DNA]</scope>
    <source>
        <strain>FGSC A4 / ATCC 38163 / CBS 112.46 / NRRL 194 / M139</strain>
    </source>
</reference>
<reference key="2">
    <citation type="journal article" date="2009" name="Fungal Genet. Biol.">
        <title>The 2008 update of the Aspergillus nidulans genome annotation: a community effort.</title>
        <authorList>
            <person name="Wortman J.R."/>
            <person name="Gilsenan J.M."/>
            <person name="Joardar V."/>
            <person name="Deegan J."/>
            <person name="Clutterbuck J."/>
            <person name="Andersen M.R."/>
            <person name="Archer D."/>
            <person name="Bencina M."/>
            <person name="Braus G."/>
            <person name="Coutinho P."/>
            <person name="von Dohren H."/>
            <person name="Doonan J."/>
            <person name="Driessen A.J."/>
            <person name="Durek P."/>
            <person name="Espeso E."/>
            <person name="Fekete E."/>
            <person name="Flipphi M."/>
            <person name="Estrada C.G."/>
            <person name="Geysens S."/>
            <person name="Goldman G."/>
            <person name="de Groot P.W."/>
            <person name="Hansen K."/>
            <person name="Harris S.D."/>
            <person name="Heinekamp T."/>
            <person name="Helmstaedt K."/>
            <person name="Henrissat B."/>
            <person name="Hofmann G."/>
            <person name="Homan T."/>
            <person name="Horio T."/>
            <person name="Horiuchi H."/>
            <person name="James S."/>
            <person name="Jones M."/>
            <person name="Karaffa L."/>
            <person name="Karanyi Z."/>
            <person name="Kato M."/>
            <person name="Keller N."/>
            <person name="Kelly D.E."/>
            <person name="Kiel J.A."/>
            <person name="Kim J.M."/>
            <person name="van der Klei I.J."/>
            <person name="Klis F.M."/>
            <person name="Kovalchuk A."/>
            <person name="Krasevec N."/>
            <person name="Kubicek C.P."/>
            <person name="Liu B."/>
            <person name="Maccabe A."/>
            <person name="Meyer V."/>
            <person name="Mirabito P."/>
            <person name="Miskei M."/>
            <person name="Mos M."/>
            <person name="Mullins J."/>
            <person name="Nelson D.R."/>
            <person name="Nielsen J."/>
            <person name="Oakley B.R."/>
            <person name="Osmani S.A."/>
            <person name="Pakula T."/>
            <person name="Paszewski A."/>
            <person name="Paulsen I."/>
            <person name="Pilsyk S."/>
            <person name="Pocsi I."/>
            <person name="Punt P.J."/>
            <person name="Ram A.F."/>
            <person name="Ren Q."/>
            <person name="Robellet X."/>
            <person name="Robson G."/>
            <person name="Seiboth B."/>
            <person name="van Solingen P."/>
            <person name="Specht T."/>
            <person name="Sun J."/>
            <person name="Taheri-Talesh N."/>
            <person name="Takeshita N."/>
            <person name="Ussery D."/>
            <person name="vanKuyk P.A."/>
            <person name="Visser H."/>
            <person name="van de Vondervoort P.J."/>
            <person name="de Vries R.P."/>
            <person name="Walton J."/>
            <person name="Xiang X."/>
            <person name="Xiong Y."/>
            <person name="Zeng A.P."/>
            <person name="Brandt B.W."/>
            <person name="Cornell M.J."/>
            <person name="van den Hondel C.A."/>
            <person name="Visser J."/>
            <person name="Oliver S.G."/>
            <person name="Turner G."/>
        </authorList>
    </citation>
    <scope>GENOME REANNOTATION</scope>
    <source>
        <strain>FGSC A4 / ATCC 38163 / CBS 112.46 / NRRL 194 / M139</strain>
    </source>
</reference>
<gene>
    <name type="primary">fmp52</name>
    <name type="ORF">AN1753</name>
</gene>
<comment type="subcellular location">
    <subcellularLocation>
        <location evidence="1">Mitochondrion outer membrane</location>
        <topology evidence="1">Peripheral membrane protein</topology>
    </subcellularLocation>
</comment>
<comment type="similarity">
    <text evidence="2">Belongs to the FMP52 family.</text>
</comment>
<dbReference type="EMBL" id="AACD01000027">
    <property type="protein sequence ID" value="EAA64039.1"/>
    <property type="molecule type" value="Genomic_DNA"/>
</dbReference>
<dbReference type="EMBL" id="BN001307">
    <property type="protein sequence ID" value="CBF85498.1"/>
    <property type="molecule type" value="Genomic_DNA"/>
</dbReference>
<dbReference type="RefSeq" id="XP_659357.1">
    <property type="nucleotide sequence ID" value="XM_654265.1"/>
</dbReference>
<dbReference type="SMR" id="Q5BCH7"/>
<dbReference type="FunCoup" id="Q5BCH7">
    <property type="interactions" value="89"/>
</dbReference>
<dbReference type="STRING" id="227321.Q5BCH7"/>
<dbReference type="EnsemblFungi" id="CBF85498">
    <property type="protein sequence ID" value="CBF85498"/>
    <property type="gene ID" value="ANIA_01753"/>
</dbReference>
<dbReference type="KEGG" id="ani:ANIA_01753"/>
<dbReference type="VEuPathDB" id="FungiDB:AN1753"/>
<dbReference type="eggNOG" id="KOG4039">
    <property type="taxonomic scope" value="Eukaryota"/>
</dbReference>
<dbReference type="HOGENOM" id="CLU_071330_3_0_1"/>
<dbReference type="InParanoid" id="Q5BCH7"/>
<dbReference type="OMA" id="DWPQLTI"/>
<dbReference type="OrthoDB" id="430436at2759"/>
<dbReference type="Proteomes" id="UP000000560">
    <property type="component" value="Chromosome VII"/>
</dbReference>
<dbReference type="GO" id="GO:0005737">
    <property type="term" value="C:cytoplasm"/>
    <property type="evidence" value="ECO:0000318"/>
    <property type="project" value="GO_Central"/>
</dbReference>
<dbReference type="GO" id="GO:0005741">
    <property type="term" value="C:mitochondrial outer membrane"/>
    <property type="evidence" value="ECO:0007669"/>
    <property type="project" value="UniProtKB-SubCell"/>
</dbReference>
<dbReference type="GO" id="GO:0051170">
    <property type="term" value="P:import into nucleus"/>
    <property type="evidence" value="ECO:0000318"/>
    <property type="project" value="GO_Central"/>
</dbReference>
<dbReference type="FunFam" id="3.40.50.720:FF:000366">
    <property type="entry name" value="Protein FMP52, mitochondrial"/>
    <property type="match status" value="1"/>
</dbReference>
<dbReference type="Gene3D" id="3.40.50.720">
    <property type="entry name" value="NAD(P)-binding Rossmann-like Domain"/>
    <property type="match status" value="1"/>
</dbReference>
<dbReference type="InterPro" id="IPR014843">
    <property type="entry name" value="Him1/Fmp52"/>
</dbReference>
<dbReference type="InterPro" id="IPR036291">
    <property type="entry name" value="NAD(P)-bd_dom_sf"/>
</dbReference>
<dbReference type="PANTHER" id="PTHR14097">
    <property type="entry name" value="OXIDOREDUCTASE HTATIP2"/>
    <property type="match status" value="1"/>
</dbReference>
<dbReference type="PANTHER" id="PTHR14097:SF7">
    <property type="entry name" value="OXIDOREDUCTASE HTATIP2"/>
    <property type="match status" value="1"/>
</dbReference>
<dbReference type="Pfam" id="PF08732">
    <property type="entry name" value="HIM1"/>
    <property type="match status" value="1"/>
</dbReference>
<dbReference type="SUPFAM" id="SSF51735">
    <property type="entry name" value="NAD(P)-binding Rossmann-fold domains"/>
    <property type="match status" value="1"/>
</dbReference>